<name>RSMJ_SHEDO</name>
<gene>
    <name evidence="1" type="primary">rsmJ</name>
    <name type="ordered locus">Sden_3610</name>
</gene>
<organism>
    <name type="scientific">Shewanella denitrificans (strain OS217 / ATCC BAA-1090 / DSM 15013)</name>
    <dbReference type="NCBI Taxonomy" id="318161"/>
    <lineage>
        <taxon>Bacteria</taxon>
        <taxon>Pseudomonadati</taxon>
        <taxon>Pseudomonadota</taxon>
        <taxon>Gammaproteobacteria</taxon>
        <taxon>Alteromonadales</taxon>
        <taxon>Shewanellaceae</taxon>
        <taxon>Shewanella</taxon>
    </lineage>
</organism>
<dbReference type="EC" id="2.1.1.242" evidence="1"/>
<dbReference type="EMBL" id="CP000302">
    <property type="protein sequence ID" value="ABE56885.1"/>
    <property type="molecule type" value="Genomic_DNA"/>
</dbReference>
<dbReference type="RefSeq" id="WP_011498024.1">
    <property type="nucleotide sequence ID" value="NC_007954.1"/>
</dbReference>
<dbReference type="SMR" id="Q12I41"/>
<dbReference type="STRING" id="318161.Sden_3610"/>
<dbReference type="KEGG" id="sdn:Sden_3610"/>
<dbReference type="eggNOG" id="COG0742">
    <property type="taxonomic scope" value="Bacteria"/>
</dbReference>
<dbReference type="HOGENOM" id="CLU_076324_0_1_6"/>
<dbReference type="Proteomes" id="UP000001982">
    <property type="component" value="Chromosome"/>
</dbReference>
<dbReference type="GO" id="GO:0005737">
    <property type="term" value="C:cytoplasm"/>
    <property type="evidence" value="ECO:0007669"/>
    <property type="project" value="UniProtKB-SubCell"/>
</dbReference>
<dbReference type="GO" id="GO:0008990">
    <property type="term" value="F:rRNA (guanine-N2-)-methyltransferase activity"/>
    <property type="evidence" value="ECO:0007669"/>
    <property type="project" value="UniProtKB-UniRule"/>
</dbReference>
<dbReference type="CDD" id="cd02440">
    <property type="entry name" value="AdoMet_MTases"/>
    <property type="match status" value="1"/>
</dbReference>
<dbReference type="Gene3D" id="3.40.50.150">
    <property type="entry name" value="Vaccinia Virus protein VP39"/>
    <property type="match status" value="1"/>
</dbReference>
<dbReference type="Gene3D" id="3.40.1630.10">
    <property type="entry name" value="YhiQ-like domain"/>
    <property type="match status" value="1"/>
</dbReference>
<dbReference type="HAMAP" id="MF_01523">
    <property type="entry name" value="16SrRNA_methyltr_J"/>
    <property type="match status" value="1"/>
</dbReference>
<dbReference type="InterPro" id="IPR007536">
    <property type="entry name" value="16SrRNA_methylTrfase_J"/>
</dbReference>
<dbReference type="InterPro" id="IPR029063">
    <property type="entry name" value="SAM-dependent_MTases_sf"/>
</dbReference>
<dbReference type="PANTHER" id="PTHR36112">
    <property type="entry name" value="RIBOSOMAL RNA SMALL SUBUNIT METHYLTRANSFERASE J"/>
    <property type="match status" value="1"/>
</dbReference>
<dbReference type="PANTHER" id="PTHR36112:SF1">
    <property type="entry name" value="RIBOSOMAL RNA SMALL SUBUNIT METHYLTRANSFERASE J"/>
    <property type="match status" value="1"/>
</dbReference>
<dbReference type="Pfam" id="PF04445">
    <property type="entry name" value="SAM_MT"/>
    <property type="match status" value="1"/>
</dbReference>
<dbReference type="SUPFAM" id="SSF53335">
    <property type="entry name" value="S-adenosyl-L-methionine-dependent methyltransferases"/>
    <property type="match status" value="1"/>
</dbReference>
<feature type="chain" id="PRO_0000292644" description="Ribosomal RNA small subunit methyltransferase J">
    <location>
        <begin position="1"/>
        <end position="248"/>
    </location>
</feature>
<feature type="binding site" evidence="1">
    <location>
        <begin position="98"/>
        <end position="99"/>
    </location>
    <ligand>
        <name>S-adenosyl-L-methionine</name>
        <dbReference type="ChEBI" id="CHEBI:59789"/>
    </ligand>
</feature>
<feature type="binding site" evidence="1">
    <location>
        <begin position="114"/>
        <end position="115"/>
    </location>
    <ligand>
        <name>S-adenosyl-L-methionine</name>
        <dbReference type="ChEBI" id="CHEBI:59789"/>
    </ligand>
</feature>
<feature type="binding site" evidence="1">
    <location>
        <begin position="150"/>
        <end position="151"/>
    </location>
    <ligand>
        <name>S-adenosyl-L-methionine</name>
        <dbReference type="ChEBI" id="CHEBI:59789"/>
    </ligand>
</feature>
<feature type="binding site" evidence="1">
    <location>
        <position position="168"/>
    </location>
    <ligand>
        <name>S-adenosyl-L-methionine</name>
        <dbReference type="ChEBI" id="CHEBI:59789"/>
    </ligand>
</feature>
<protein>
    <recommendedName>
        <fullName evidence="1">Ribosomal RNA small subunit methyltransferase J</fullName>
        <ecNumber evidence="1">2.1.1.242</ecNumber>
    </recommendedName>
    <alternativeName>
        <fullName evidence="1">16S rRNA m2G1516 methyltransferase</fullName>
    </alternativeName>
    <alternativeName>
        <fullName evidence="1">rRNA (guanine-N(2)-)-methyltransferase</fullName>
    </alternativeName>
</protein>
<accession>Q12I41</accession>
<keyword id="KW-0963">Cytoplasm</keyword>
<keyword id="KW-0489">Methyltransferase</keyword>
<keyword id="KW-1185">Reference proteome</keyword>
<keyword id="KW-0698">rRNA processing</keyword>
<keyword id="KW-0949">S-adenosyl-L-methionine</keyword>
<keyword id="KW-0808">Transferase</keyword>
<comment type="function">
    <text evidence="1">Specifically methylates the guanosine in position 1516 of 16S rRNA.</text>
</comment>
<comment type="catalytic activity">
    <reaction evidence="1">
        <text>guanosine(1516) in 16S rRNA + S-adenosyl-L-methionine = N(2)-methylguanosine(1516) in 16S rRNA + S-adenosyl-L-homocysteine + H(+)</text>
        <dbReference type="Rhea" id="RHEA:43220"/>
        <dbReference type="Rhea" id="RHEA-COMP:10412"/>
        <dbReference type="Rhea" id="RHEA-COMP:10413"/>
        <dbReference type="ChEBI" id="CHEBI:15378"/>
        <dbReference type="ChEBI" id="CHEBI:57856"/>
        <dbReference type="ChEBI" id="CHEBI:59789"/>
        <dbReference type="ChEBI" id="CHEBI:74269"/>
        <dbReference type="ChEBI" id="CHEBI:74481"/>
        <dbReference type="EC" id="2.1.1.242"/>
    </reaction>
</comment>
<comment type="subcellular location">
    <subcellularLocation>
        <location evidence="1">Cytoplasm</location>
    </subcellularLocation>
</comment>
<comment type="similarity">
    <text evidence="1">Belongs to the methyltransferase superfamily. RsmJ family.</text>
</comment>
<evidence type="ECO:0000255" key="1">
    <source>
        <dbReference type="HAMAP-Rule" id="MF_01523"/>
    </source>
</evidence>
<reference key="1">
    <citation type="submission" date="2006-03" db="EMBL/GenBank/DDBJ databases">
        <title>Complete sequence of Shewanella denitrificans OS217.</title>
        <authorList>
            <consortium name="US DOE Joint Genome Institute"/>
            <person name="Copeland A."/>
            <person name="Lucas S."/>
            <person name="Lapidus A."/>
            <person name="Barry K."/>
            <person name="Detter J.C."/>
            <person name="Glavina del Rio T."/>
            <person name="Hammon N."/>
            <person name="Israni S."/>
            <person name="Dalin E."/>
            <person name="Tice H."/>
            <person name="Pitluck S."/>
            <person name="Brettin T."/>
            <person name="Bruce D."/>
            <person name="Han C."/>
            <person name="Tapia R."/>
            <person name="Gilna P."/>
            <person name="Kiss H."/>
            <person name="Schmutz J."/>
            <person name="Larimer F."/>
            <person name="Land M."/>
            <person name="Hauser L."/>
            <person name="Kyrpides N."/>
            <person name="Lykidis A."/>
            <person name="Richardson P."/>
        </authorList>
    </citation>
    <scope>NUCLEOTIDE SEQUENCE [LARGE SCALE GENOMIC DNA]</scope>
    <source>
        <strain>OS217 / ATCC BAA-1090 / DSM 15013</strain>
    </source>
</reference>
<sequence length="248" mass="27531">MTRIFFNQQYPTLVDISQRWQLEFDKEAEFELKFEQNQLSLHKRDEPKLDGIVVDFISGAVAHRRKFGGGRGQSIAKAVGLKQGVTPTVVDGTAGLGRDAFVLASLGCKVIMVERHPVVAALLEDGLRRAYDDAEIGAWMTERMSLFPGSSLEALAKITDAVDVVYLDPMYPHRDKSALVKKEMRVFQSLVGADLDADGLLTPAMTLATKRVVVKRPDYAEDLDGIKPSMVIATKKNRFDVYIKAAMK</sequence>
<proteinExistence type="inferred from homology"/>